<evidence type="ECO:0000255" key="1"/>
<evidence type="ECO:0000256" key="2">
    <source>
        <dbReference type="SAM" id="MobiDB-lite"/>
    </source>
</evidence>
<evidence type="ECO:0000305" key="3"/>
<comment type="function">
    <text>KAHRP might mimick human histidine-rich glycoproteins to anchor host thrombospondin or a parasite analog in a binding complex with the endothelial cell receptor.</text>
</comment>
<comment type="subcellular location">
    <subcellularLocation>
        <location>Secreted</location>
    </subcellularLocation>
    <text>Cytoplasmic side of the membrane of infected erythrocytes.</text>
</comment>
<feature type="signal peptide" evidence="1">
    <location>
        <begin position="1"/>
        <end position="34"/>
    </location>
</feature>
<feature type="chain" id="PRO_0000024545" description="Knob-associated histidine-rich protein">
    <location>
        <begin position="35"/>
        <end position="634"/>
    </location>
</feature>
<feature type="repeat" description="1">
    <location>
        <begin position="540"/>
        <end position="549"/>
    </location>
</feature>
<feature type="repeat" description="2">
    <location>
        <begin position="550"/>
        <end position="559"/>
    </location>
</feature>
<feature type="repeat" description="3">
    <location>
        <begin position="560"/>
        <end position="569"/>
    </location>
</feature>
<feature type="repeat" description="4">
    <location>
        <begin position="570"/>
        <end position="579"/>
    </location>
</feature>
<feature type="region of interest" description="Disordered" evidence="2">
    <location>
        <begin position="57"/>
        <end position="143"/>
    </location>
</feature>
<feature type="region of interest" description="Disordered" evidence="2">
    <location>
        <begin position="347"/>
        <end position="634"/>
    </location>
</feature>
<feature type="region of interest" description="4 X 10 AA tandem repeats of [TS]-[KE]-[GE]-A-T-K-[EG]-A-S-T">
    <location>
        <begin position="540"/>
        <end position="580"/>
    </location>
</feature>
<feature type="compositionally biased region" description="Basic residues" evidence="2">
    <location>
        <begin position="57"/>
        <end position="87"/>
    </location>
</feature>
<feature type="compositionally biased region" description="Low complexity" evidence="2">
    <location>
        <begin position="95"/>
        <end position="104"/>
    </location>
</feature>
<feature type="compositionally biased region" description="Basic residues" evidence="2">
    <location>
        <begin position="108"/>
        <end position="117"/>
    </location>
</feature>
<feature type="compositionally biased region" description="Basic and acidic residues" evidence="2">
    <location>
        <begin position="354"/>
        <end position="375"/>
    </location>
</feature>
<feature type="compositionally biased region" description="Basic and acidic residues" evidence="2">
    <location>
        <begin position="396"/>
        <end position="405"/>
    </location>
</feature>
<feature type="compositionally biased region" description="Basic residues" evidence="2">
    <location>
        <begin position="406"/>
        <end position="422"/>
    </location>
</feature>
<feature type="compositionally biased region" description="Basic and acidic residues" evidence="2">
    <location>
        <begin position="423"/>
        <end position="444"/>
    </location>
</feature>
<feature type="compositionally biased region" description="Basic and acidic residues" evidence="2">
    <location>
        <begin position="453"/>
        <end position="493"/>
    </location>
</feature>
<feature type="compositionally biased region" description="Polar residues" evidence="2">
    <location>
        <begin position="494"/>
        <end position="505"/>
    </location>
</feature>
<feature type="compositionally biased region" description="Basic and acidic residues" evidence="2">
    <location>
        <begin position="509"/>
        <end position="520"/>
    </location>
</feature>
<feature type="compositionally biased region" description="Low complexity" evidence="2">
    <location>
        <begin position="567"/>
        <end position="591"/>
    </location>
</feature>
<feature type="compositionally biased region" description="Polar residues" evidence="2">
    <location>
        <begin position="605"/>
        <end position="620"/>
    </location>
</feature>
<feature type="compositionally biased region" description="Basic residues" evidence="2">
    <location>
        <begin position="625"/>
        <end position="634"/>
    </location>
</feature>
<feature type="glycosylation site" description="N-linked (GlcNAc...) asparagine" evidence="1">
    <location>
        <position position="42"/>
    </location>
</feature>
<feature type="sequence conflict" description="In Ref. 2 and 3." evidence="3" ref="2 3">
    <original>A</original>
    <variation>T</variation>
    <location>
        <position position="260"/>
    </location>
</feature>
<feature type="sequence conflict" description="In Ref. 2; AAA29632." evidence="3" ref="2">
    <original>V</original>
    <variation>A</variation>
    <location>
        <position position="492"/>
    </location>
</feature>
<feature type="sequence conflict" description="In Ref. 2; AAA29632." evidence="3" ref="2">
    <original>P</original>
    <variation>T</variation>
    <location>
        <position position="507"/>
    </location>
</feature>
<feature type="sequence conflict" description="In Ref. 2; AAA29632." evidence="3" ref="2">
    <original>A</original>
    <variation>T</variation>
    <location>
        <position position="539"/>
    </location>
</feature>
<feature type="sequence conflict" description="In Ref. 2; AAA29632." evidence="3" ref="2">
    <original>A</original>
    <variation>T</variation>
    <location>
        <position position="543"/>
    </location>
</feature>
<name>KNOB_PLAFG</name>
<dbReference type="EMBL" id="J02972">
    <property type="protein sequence ID" value="AAA29629.1"/>
    <property type="molecule type" value="mRNA"/>
</dbReference>
<dbReference type="EMBL" id="M19881">
    <property type="protein sequence ID" value="AAA29632.1"/>
    <property type="molecule type" value="Genomic_DNA"/>
</dbReference>
<dbReference type="EMBL" id="M14210">
    <property type="protein sequence ID" value="AAA29631.1"/>
    <property type="molecule type" value="mRNA"/>
</dbReference>
<dbReference type="PIR" id="A26480">
    <property type="entry name" value="A26480"/>
</dbReference>
<dbReference type="PIR" id="A28412">
    <property type="entry name" value="A28412"/>
</dbReference>
<dbReference type="PIR" id="A54495">
    <property type="entry name" value="A54495"/>
</dbReference>
<dbReference type="BMRB" id="P09346"/>
<dbReference type="TCDB" id="9.B.367.1.1">
    <property type="family name" value="the plasmodium falciparum virulence factor trafficking system (pfvfts) family"/>
</dbReference>
<dbReference type="GO" id="GO:0005576">
    <property type="term" value="C:extracellular region"/>
    <property type="evidence" value="ECO:0007669"/>
    <property type="project" value="UniProtKB-SubCell"/>
</dbReference>
<dbReference type="GO" id="GO:0005634">
    <property type="term" value="C:nucleus"/>
    <property type="evidence" value="ECO:0007669"/>
    <property type="project" value="TreeGrafter"/>
</dbReference>
<dbReference type="GO" id="GO:0016973">
    <property type="term" value="P:poly(A)+ mRNA export from nucleus"/>
    <property type="evidence" value="ECO:0007669"/>
    <property type="project" value="TreeGrafter"/>
</dbReference>
<dbReference type="InterPro" id="IPR040805">
    <property type="entry name" value="EMP3/KAHRP_N"/>
</dbReference>
<dbReference type="InterPro" id="IPR051037">
    <property type="entry name" value="RNAPII_TF_IWS1"/>
</dbReference>
<dbReference type="PANTHER" id="PTHR46010">
    <property type="entry name" value="PROTEIN IWS1 HOMOLOG"/>
    <property type="match status" value="1"/>
</dbReference>
<dbReference type="PANTHER" id="PTHR46010:SF1">
    <property type="entry name" value="PROTEIN IWS1 HOMOLOG"/>
    <property type="match status" value="1"/>
</dbReference>
<dbReference type="Pfam" id="PF17986">
    <property type="entry name" value="EKAL"/>
    <property type="match status" value="1"/>
</dbReference>
<reference key="1">
    <citation type="journal article" date="1987" name="Proc. Natl. Acad. Sci. U.S.A.">
        <title>Primary structure and subcellular localization of the knob-associated histidine-rich protein of Plasmodium falciparum.</title>
        <authorList>
            <person name="Pologe L.G."/>
            <person name="Pavlovec A."/>
            <person name="Shio H."/>
            <person name="Ravetch J.V."/>
        </authorList>
    </citation>
    <scope>NUCLEOTIDE SEQUENCE [MRNA]</scope>
</reference>
<reference key="2">
    <citation type="journal article" date="1987" name="Mol. Biochem. Parasitol.">
        <title>Structure of the knob protein (KP) gene of Plasmodium falciparum.</title>
        <authorList>
            <person name="Sharma Y.D."/>
            <person name="Kilejian A."/>
        </authorList>
    </citation>
    <scope>NUCLEOTIDE SEQUENCE [GENOMIC DNA]</scope>
</reference>
<reference key="3">
    <citation type="journal article" date="1986" name="Proc. Natl. Acad. Sci. U.S.A.">
        <title>Histidine-rich domain of the knob protein of the human malaria parasite Plasmodium falciparum.</title>
        <authorList>
            <person name="Kilejian A."/>
            <person name="Sharma Y.D."/>
            <person name="Karoui H."/>
            <person name="Naslund L."/>
        </authorList>
    </citation>
    <scope>NUCLEOTIDE SEQUENCE OF 1-270</scope>
</reference>
<accession>P09346</accession>
<accession>P13818</accession>
<sequence length="634" mass="69149">MKSFKNKNTLRRKKAFPVFTKILLVSFLVWVLKCSNNCNNGNGSGDSFDFRNKRTLAQKQHEHHHHHHHQHQHQHQAPHQAHHHHHHGEVNHQAPQVHQQVHGQDQAHHHHHHHHHQLQPQQLQGTVANPPSNEPVVKTQVFREARPGGGFKAYEEKYESKHYKLKENVVDGKKDCDEKYEAANYAFSEECPYTVNDYSQENGPNIFALRKRFPLGMNDEDEEGKEALAIKDKLPGGLDEYQNQLYGICNETCTTCGPAAIDYVPADAPNGYAYGGSAHDGSHGNLRGHGNKGSEGYGYEAPYNPGFNGAPGSNGMQNYVPPHGAGYSAPYGVPHGAAHGSRYSSFSSVNKYGKHGDEKHHSSKKHEGNDGEGEKKKKSKKHKDHDGEKKKSKKHKDNEDAESVKSKKHKSHDCEKKKSKKHKDNEDAESVKSKKSVKEKGEKHNGKKPCSKKTNEENKNKEKTNNLKSDGSKAHEKKENETKNTAGENKKVDSTSADNKSTNAATPGAKDKTQGGKTDKTGASTNAATNKGQCAAEGATKGATKEASTSKEATKEASTSKGATKEASTTEGATKGASTTAGSTTGATTGANAVQSKDGTADKNAANNGEQVMSRGQAQLQEAGKKKKKRGCCG</sequence>
<proteinExistence type="evidence at transcript level"/>
<organism>
    <name type="scientific">Plasmodium falciparum (isolate FCR-3 / Gambia)</name>
    <dbReference type="NCBI Taxonomy" id="5838"/>
    <lineage>
        <taxon>Eukaryota</taxon>
        <taxon>Sar</taxon>
        <taxon>Alveolata</taxon>
        <taxon>Apicomplexa</taxon>
        <taxon>Aconoidasida</taxon>
        <taxon>Haemosporida</taxon>
        <taxon>Plasmodiidae</taxon>
        <taxon>Plasmodium</taxon>
        <taxon>Plasmodium (Laverania)</taxon>
    </lineage>
</organism>
<keyword id="KW-0325">Glycoprotein</keyword>
<keyword id="KW-0461">Malaria</keyword>
<keyword id="KW-0677">Repeat</keyword>
<keyword id="KW-0964">Secreted</keyword>
<keyword id="KW-0732">Signal</keyword>
<protein>
    <recommendedName>
        <fullName>Knob-associated histidine-rich protein</fullName>
        <shortName>KAHRP</shortName>
        <shortName>KP</shortName>
    </recommendedName>
</protein>